<keyword id="KW-0325">Glycoprotein</keyword>
<keyword id="KW-0472">Membrane</keyword>
<keyword id="KW-1185">Reference proteome</keyword>
<keyword id="KW-0812">Transmembrane</keyword>
<keyword id="KW-1133">Transmembrane helix</keyword>
<gene>
    <name type="ORF">AAEL009094</name>
</gene>
<organism>
    <name type="scientific">Aedes aegypti</name>
    <name type="common">Yellowfever mosquito</name>
    <name type="synonym">Culex aegypti</name>
    <dbReference type="NCBI Taxonomy" id="7159"/>
    <lineage>
        <taxon>Eukaryota</taxon>
        <taxon>Metazoa</taxon>
        <taxon>Ecdysozoa</taxon>
        <taxon>Arthropoda</taxon>
        <taxon>Hexapoda</taxon>
        <taxon>Insecta</taxon>
        <taxon>Pterygota</taxon>
        <taxon>Neoptera</taxon>
        <taxon>Endopterygota</taxon>
        <taxon>Diptera</taxon>
        <taxon>Nematocera</taxon>
        <taxon>Culicoidea</taxon>
        <taxon>Culicidae</taxon>
        <taxon>Culicinae</taxon>
        <taxon>Aedini</taxon>
        <taxon>Aedes</taxon>
        <taxon>Stegomyia</taxon>
    </lineage>
</organism>
<accession>Q16WU7</accession>
<dbReference type="EMBL" id="CH477554">
    <property type="protein sequence ID" value="EAT39064.1"/>
    <property type="molecule type" value="Genomic_DNA"/>
</dbReference>
<dbReference type="RefSeq" id="XP_001659710.1">
    <property type="nucleotide sequence ID" value="XM_001659660.1"/>
</dbReference>
<dbReference type="SMR" id="Q16WU7"/>
<dbReference type="FunCoup" id="Q16WU7">
    <property type="interactions" value="3"/>
</dbReference>
<dbReference type="STRING" id="7159.Q16WU7"/>
<dbReference type="PaxDb" id="7159-AAEL009094-PA"/>
<dbReference type="VEuPathDB" id="VectorBase:AAEL024171"/>
<dbReference type="eggNOG" id="KOG4157">
    <property type="taxonomic scope" value="Eukaryota"/>
</dbReference>
<dbReference type="HOGENOM" id="CLU_052719_0_0_1"/>
<dbReference type="InParanoid" id="Q16WU7"/>
<dbReference type="OMA" id="EFLQFPV"/>
<dbReference type="PhylomeDB" id="Q16WU7"/>
<dbReference type="Proteomes" id="UP000008820">
    <property type="component" value="Unassembled WGS sequence"/>
</dbReference>
<dbReference type="Proteomes" id="UP000682892">
    <property type="component" value="Unassembled WGS sequence"/>
</dbReference>
<dbReference type="GO" id="GO:0016020">
    <property type="term" value="C:membrane"/>
    <property type="evidence" value="ECO:0007669"/>
    <property type="project" value="UniProtKB-SubCell"/>
</dbReference>
<dbReference type="GO" id="GO:0008146">
    <property type="term" value="F:sulfotransferase activity"/>
    <property type="evidence" value="ECO:0007669"/>
    <property type="project" value="InterPro"/>
</dbReference>
<dbReference type="Gene3D" id="3.40.50.300">
    <property type="entry name" value="P-loop containing nucleotide triphosphate hydrolases"/>
    <property type="match status" value="1"/>
</dbReference>
<dbReference type="InterPro" id="IPR027417">
    <property type="entry name" value="P-loop_NTPase"/>
</dbReference>
<dbReference type="InterPro" id="IPR051589">
    <property type="entry name" value="Sialate-O-sulfotransferase"/>
</dbReference>
<dbReference type="InterPro" id="IPR000863">
    <property type="entry name" value="Sulfotransferase_dom"/>
</dbReference>
<dbReference type="PANTHER" id="PTHR45964">
    <property type="entry name" value="WSCD FAMILY MEMBER CG9164"/>
    <property type="match status" value="1"/>
</dbReference>
<dbReference type="PANTHER" id="PTHR45964:SF5">
    <property type="entry name" value="WSCD FAMILY MEMBER CG9164"/>
    <property type="match status" value="1"/>
</dbReference>
<dbReference type="Pfam" id="PF00685">
    <property type="entry name" value="Sulfotransfer_1"/>
    <property type="match status" value="1"/>
</dbReference>
<dbReference type="SUPFAM" id="SSF52540">
    <property type="entry name" value="P-loop containing nucleoside triphosphate hydrolases"/>
    <property type="match status" value="1"/>
</dbReference>
<proteinExistence type="inferred from homology"/>
<evidence type="ECO:0000255" key="1"/>
<evidence type="ECO:0000305" key="2"/>
<comment type="subcellular location">
    <subcellularLocation>
        <location evidence="2">Membrane</location>
        <topology evidence="2">Single-pass membrane protein</topology>
    </subcellularLocation>
</comment>
<comment type="similarity">
    <text evidence="2">Belongs to the WSCD family.</text>
</comment>
<sequence length="317" mass="36110">MALRGWRLFGLAGTILVYIGGILFLSFVSLQSPQQKRNHARGYGEFETLRNRDLGLLGKKPPLQWCTELRYMDSPPPSPKAYKLLQTFPVNDGHQKSSNGRELTALVSFPGSGNTWLRYLLQQSTGILTGSVYKDYGLLKSGFPAENVANSSVLVVKTHEWGPQAWAPYGKAILLVRDPEKAILAEFNRQSGGHVGFASPDRYRRTKGRYWTQFVKNKLWAWEQTNLSWAKNFTGDVKLVFYDDLVENVEGTLRSILKFLNFPVNDELLACALMRKEGIYRRKKRILQFDPYSPAMHTAIDEKRSEVYAALGRFRSH</sequence>
<name>WSCD_AEDAE</name>
<protein>
    <recommendedName>
        <fullName>WSCD family member AAEL009094</fullName>
    </recommendedName>
</protein>
<feature type="chain" id="PRO_0000305067" description="WSCD family member AAEL009094">
    <location>
        <begin position="1"/>
        <end position="317"/>
    </location>
</feature>
<feature type="transmembrane region" description="Helical" evidence="1">
    <location>
        <begin position="8"/>
        <end position="28"/>
    </location>
</feature>
<feature type="glycosylation site" description="N-linked (GlcNAc...) asparagine" evidence="1">
    <location>
        <position position="150"/>
    </location>
</feature>
<feature type="glycosylation site" description="N-linked (GlcNAc...) asparagine" evidence="1">
    <location>
        <position position="226"/>
    </location>
</feature>
<feature type="glycosylation site" description="N-linked (GlcNAc...) asparagine" evidence="1">
    <location>
        <position position="232"/>
    </location>
</feature>
<reference key="1">
    <citation type="journal article" date="2007" name="Science">
        <title>Genome sequence of Aedes aegypti, a major arbovirus vector.</title>
        <authorList>
            <person name="Nene V."/>
            <person name="Wortman J.R."/>
            <person name="Lawson D."/>
            <person name="Haas B.J."/>
            <person name="Kodira C.D."/>
            <person name="Tu Z.J."/>
            <person name="Loftus B.J."/>
            <person name="Xi Z."/>
            <person name="Megy K."/>
            <person name="Grabherr M."/>
            <person name="Ren Q."/>
            <person name="Zdobnov E.M."/>
            <person name="Lobo N.F."/>
            <person name="Campbell K.S."/>
            <person name="Brown S.E."/>
            <person name="Bonaldo M.F."/>
            <person name="Zhu J."/>
            <person name="Sinkins S.P."/>
            <person name="Hogenkamp D.G."/>
            <person name="Amedeo P."/>
            <person name="Arensburger P."/>
            <person name="Atkinson P.W."/>
            <person name="Bidwell S.L."/>
            <person name="Biedler J."/>
            <person name="Birney E."/>
            <person name="Bruggner R.V."/>
            <person name="Costas J."/>
            <person name="Coy M.R."/>
            <person name="Crabtree J."/>
            <person name="Crawford M."/>
            <person name="DeBruyn B."/>
            <person name="DeCaprio D."/>
            <person name="Eiglmeier K."/>
            <person name="Eisenstadt E."/>
            <person name="El-Dorry H."/>
            <person name="Gelbart W.M."/>
            <person name="Gomes S.L."/>
            <person name="Hammond M."/>
            <person name="Hannick L.I."/>
            <person name="Hogan J.R."/>
            <person name="Holmes M.H."/>
            <person name="Jaffe D."/>
            <person name="Johnston S.J."/>
            <person name="Kennedy R.C."/>
            <person name="Koo H."/>
            <person name="Kravitz S."/>
            <person name="Kriventseva E.V."/>
            <person name="Kulp D."/>
            <person name="Labutti K."/>
            <person name="Lee E."/>
            <person name="Li S."/>
            <person name="Lovin D.D."/>
            <person name="Mao C."/>
            <person name="Mauceli E."/>
            <person name="Menck C.F."/>
            <person name="Miller J.R."/>
            <person name="Montgomery P."/>
            <person name="Mori A."/>
            <person name="Nascimento A.L."/>
            <person name="Naveira H.F."/>
            <person name="Nusbaum C."/>
            <person name="O'Leary S.B."/>
            <person name="Orvis J."/>
            <person name="Pertea M."/>
            <person name="Quesneville H."/>
            <person name="Reidenbach K.R."/>
            <person name="Rogers Y.-H.C."/>
            <person name="Roth C.W."/>
            <person name="Schneider J.R."/>
            <person name="Schatz M."/>
            <person name="Shumway M."/>
            <person name="Stanke M."/>
            <person name="Stinson E.O."/>
            <person name="Tubio J.M.C."/>
            <person name="Vanzee J.P."/>
            <person name="Verjovski-Almeida S."/>
            <person name="Werner D."/>
            <person name="White O.R."/>
            <person name="Wyder S."/>
            <person name="Zeng Q."/>
            <person name="Zhao Q."/>
            <person name="Zhao Y."/>
            <person name="Hill C.A."/>
            <person name="Raikhel A.S."/>
            <person name="Soares M.B."/>
            <person name="Knudson D.L."/>
            <person name="Lee N.H."/>
            <person name="Galagan J."/>
            <person name="Salzberg S.L."/>
            <person name="Paulsen I.T."/>
            <person name="Dimopoulos G."/>
            <person name="Collins F.H."/>
            <person name="Bruce B."/>
            <person name="Fraser-Liggett C.M."/>
            <person name="Severson D.W."/>
        </authorList>
    </citation>
    <scope>NUCLEOTIDE SEQUENCE [LARGE SCALE GENOMIC DNA]</scope>
    <source>
        <strain>LVPib12</strain>
    </source>
</reference>